<accession>P52127</accession>
<accession>Q2MAE3</accession>
<reference key="1">
    <citation type="journal article" date="1997" name="Science">
        <title>The complete genome sequence of Escherichia coli K-12.</title>
        <authorList>
            <person name="Blattner F.R."/>
            <person name="Plunkett G. III"/>
            <person name="Bloch C.A."/>
            <person name="Perna N.T."/>
            <person name="Burland V."/>
            <person name="Riley M."/>
            <person name="Collado-Vides J."/>
            <person name="Glasner J.D."/>
            <person name="Rode C.K."/>
            <person name="Mayhew G.F."/>
            <person name="Gregor J."/>
            <person name="Davis N.W."/>
            <person name="Kirkpatrick H.A."/>
            <person name="Goeden M.A."/>
            <person name="Rose D.J."/>
            <person name="Mau B."/>
            <person name="Shao Y."/>
        </authorList>
    </citation>
    <scope>NUCLEOTIDE SEQUENCE [LARGE SCALE GENOMIC DNA]</scope>
    <source>
        <strain>K12 / MG1655 / ATCC 47076</strain>
    </source>
</reference>
<reference key="2">
    <citation type="journal article" date="2006" name="Mol. Syst. Biol.">
        <title>Highly accurate genome sequences of Escherichia coli K-12 strains MG1655 and W3110.</title>
        <authorList>
            <person name="Hayashi K."/>
            <person name="Morooka N."/>
            <person name="Yamamoto Y."/>
            <person name="Fujita K."/>
            <person name="Isono K."/>
            <person name="Choi S."/>
            <person name="Ohtsubo E."/>
            <person name="Baba T."/>
            <person name="Wanner B.L."/>
            <person name="Mori H."/>
            <person name="Horiuchi T."/>
        </authorList>
    </citation>
    <scope>NUCLEOTIDE SEQUENCE [LARGE SCALE GENOMIC DNA]</scope>
    <source>
        <strain>K12 / W3110 / ATCC 27325 / DSM 5911</strain>
    </source>
</reference>
<reference key="3">
    <citation type="journal article" date="2014" name="Genes Genet. Syst.">
        <title>AbpA and AbpB provide anti-phage activity in Escherichia coli.</title>
        <authorList>
            <person name="Yasui R."/>
            <person name="Washizaki A."/>
            <person name="Furihata Y."/>
            <person name="Yonesaki T."/>
            <person name="Otsuka Y."/>
        </authorList>
    </citation>
    <scope>FUNCTION</scope>
    <scope>INTERACTION WITH ABPB</scope>
    <scope>SUBUNIT</scope>
    <scope>DISRUPTION PHENOTYPE</scope>
    <source>
        <strain>K12 /MH1</strain>
    </source>
</reference>
<protein>
    <recommendedName>
        <fullName evidence="3">Anti-bacteriophage protein A</fullName>
    </recommendedName>
</protein>
<gene>
    <name evidence="3" type="primary">abpA</name>
    <name type="synonym">yfjL</name>
    <name type="ordered locus">b2628</name>
    <name type="ordered locus">JW2609</name>
</gene>
<feature type="chain" id="PRO_0000169277" description="Anti-bacteriophage protein A">
    <location>
        <begin position="1"/>
        <end position="538"/>
    </location>
</feature>
<dbReference type="EMBL" id="U36840">
    <property type="protein sequence ID" value="AAA79797.1"/>
    <property type="molecule type" value="Genomic_DNA"/>
</dbReference>
<dbReference type="EMBL" id="U00096">
    <property type="protein sequence ID" value="AAC75676.1"/>
    <property type="molecule type" value="Genomic_DNA"/>
</dbReference>
<dbReference type="EMBL" id="AP009048">
    <property type="protein sequence ID" value="BAE76763.1"/>
    <property type="molecule type" value="Genomic_DNA"/>
</dbReference>
<dbReference type="PIR" id="T08640">
    <property type="entry name" value="T08640"/>
</dbReference>
<dbReference type="RefSeq" id="NP_417117.1">
    <property type="nucleotide sequence ID" value="NC_000913.3"/>
</dbReference>
<dbReference type="RefSeq" id="WP_000445380.1">
    <property type="nucleotide sequence ID" value="NZ_LN832404.1"/>
</dbReference>
<dbReference type="BioGRID" id="4260624">
    <property type="interactions" value="14"/>
</dbReference>
<dbReference type="FunCoup" id="P52127">
    <property type="interactions" value="5"/>
</dbReference>
<dbReference type="IntAct" id="P52127">
    <property type="interactions" value="3"/>
</dbReference>
<dbReference type="STRING" id="511145.b2628"/>
<dbReference type="PaxDb" id="511145-b2628"/>
<dbReference type="DNASU" id="947110"/>
<dbReference type="EnsemblBacteria" id="AAC75676">
    <property type="protein sequence ID" value="AAC75676"/>
    <property type="gene ID" value="b2628"/>
</dbReference>
<dbReference type="GeneID" id="947110"/>
<dbReference type="KEGG" id="ecj:JW2609"/>
<dbReference type="KEGG" id="eco:b2628"/>
<dbReference type="KEGG" id="ecoc:C3026_14540"/>
<dbReference type="PATRIC" id="fig|511145.12.peg.2723"/>
<dbReference type="EchoBASE" id="EB2990"/>
<dbReference type="eggNOG" id="ENOG502Z9HJ">
    <property type="taxonomic scope" value="Bacteria"/>
</dbReference>
<dbReference type="HOGENOM" id="CLU_503133_0_0_6"/>
<dbReference type="InParanoid" id="P52127"/>
<dbReference type="OMA" id="RFRIVTK"/>
<dbReference type="OrthoDB" id="785623at2"/>
<dbReference type="BioCyc" id="EcoCyc:G7363-MONOMER"/>
<dbReference type="PRO" id="PR:P52127"/>
<dbReference type="Proteomes" id="UP000000625">
    <property type="component" value="Chromosome"/>
</dbReference>
<dbReference type="GO" id="GO:0004518">
    <property type="term" value="F:nuclease activity"/>
    <property type="evidence" value="ECO:0007669"/>
    <property type="project" value="InterPro"/>
</dbReference>
<dbReference type="GO" id="GO:0051607">
    <property type="term" value="P:defense response to virus"/>
    <property type="evidence" value="ECO:0000315"/>
    <property type="project" value="EcoCyc"/>
</dbReference>
<dbReference type="InterPro" id="IPR014976">
    <property type="entry name" value="AbpA_HamA_C"/>
</dbReference>
<dbReference type="InterPro" id="IPR025382">
    <property type="entry name" value="Cap4-like_endonuclease_dom"/>
</dbReference>
<dbReference type="Pfam" id="PF14130">
    <property type="entry name" value="Cap4_nuclease"/>
    <property type="match status" value="1"/>
</dbReference>
<dbReference type="Pfam" id="PF08878">
    <property type="entry name" value="HamA"/>
    <property type="match status" value="1"/>
</dbReference>
<organism>
    <name type="scientific">Escherichia coli (strain K12)</name>
    <dbReference type="NCBI Taxonomy" id="83333"/>
    <lineage>
        <taxon>Bacteria</taxon>
        <taxon>Pseudomonadati</taxon>
        <taxon>Pseudomonadota</taxon>
        <taxon>Gammaproteobacteria</taxon>
        <taxon>Enterobacterales</taxon>
        <taxon>Enterobacteriaceae</taxon>
        <taxon>Escherichia</taxon>
    </lineage>
</organism>
<keyword id="KW-0051">Antiviral defense</keyword>
<keyword id="KW-1185">Reference proteome</keyword>
<sequence length="538" mass="62007">MESNDSGGVAAKHGFLFQDCVAAYHVTRMLRDKTIRSVRCEVTDDIDIVSDGYIDFVQVKSTGKTRWNISDIVQNSKGADKKTIPCSSILHKSMQCESDLSLGRRYSIVTEEKVNKTLEYLTISPNARLDKPGRQELIDDLNKRTDNFLTDSGISVSDWIDAATWEVFSSLRELELLGIKNIRLASQDLHGVILSSETVAEDIWCRILDTVTRKGEHSRRIHSADDKSYLRPDLLEWFKQRVEDDQSRSGRKIYVKRDLPHILTPFRAPMASVCAKRKGQVLHQQYSLKKYRYKHIADNVCQWLDEVFLRPKEMSDIHKLTFIEKRERLKNSVFKSLHDVSEFLGRVLLHATIRQHHESQPIPCMLYVEKAGAEKILENVHIVRRDPEGDQLWIGFSELVTDINIAVRLPEIRDQLYEDISDCIDTARKKILDIKDDNYLLRHDIDEILDGSQPFDAHLDRFTFVLFVGYDSNLLTEPETPGFEDDLEKETAVLFEKFAADLIEDSPFANLCIHVFIYPAPSLERLTQLVDEKVREVV</sequence>
<name>ABPA_ECOLI</name>
<proteinExistence type="evidence at protein level"/>
<comment type="function">
    <text evidence="1">Part of an antiviral system composed of AbpA and AbpB; when both are expressed from a plasmid they confer resistance to phages T2, T4, T7 and lambda but not RB32 or RB69. Resistance is temperature dependent, it can be seen at 30 degrees Celsius but not at 37 or 42 degrees Celsius. The system impairs phage but not bacterial DNA synthesis (shown for T4, T7 and lambda). Partially suppressed by mutations in T4 gene 41, a replicative helicase.</text>
</comment>
<comment type="subunit">
    <text evidence="1">Interacts with AbpB.</text>
</comment>
<comment type="disruption phenotype">
    <text evidence="1">About 20% increase in T4 progeny; the phenotype is the same in a double abpA-abpB deletion.</text>
</comment>
<comment type="miscellaneous">
    <text evidence="2">Part of prophage CP4-57.</text>
</comment>
<evidence type="ECO:0000269" key="1">
    <source>
    </source>
</evidence>
<evidence type="ECO:0000269" key="2">
    <source>
    </source>
</evidence>
<evidence type="ECO:0000303" key="3">
    <source>
    </source>
</evidence>